<reference key="1">
    <citation type="journal article" date="2008" name="Appl. Environ. Microbiol.">
        <title>The genome of Polaromonas sp. strain JS666: insights into the evolution of a hydrocarbon- and xenobiotic-degrading bacterium, and features of relevance to biotechnology.</title>
        <authorList>
            <person name="Mattes T.E."/>
            <person name="Alexander A.K."/>
            <person name="Richardson P.M."/>
            <person name="Munk A.C."/>
            <person name="Han C.S."/>
            <person name="Stothard P."/>
            <person name="Coleman N.V."/>
        </authorList>
    </citation>
    <scope>NUCLEOTIDE SEQUENCE [LARGE SCALE GENOMIC DNA]</scope>
    <source>
        <strain>JS666 / ATCC BAA-500</strain>
    </source>
</reference>
<organism>
    <name type="scientific">Polaromonas sp. (strain JS666 / ATCC BAA-500)</name>
    <dbReference type="NCBI Taxonomy" id="296591"/>
    <lineage>
        <taxon>Bacteria</taxon>
        <taxon>Pseudomonadati</taxon>
        <taxon>Pseudomonadota</taxon>
        <taxon>Betaproteobacteria</taxon>
        <taxon>Burkholderiales</taxon>
        <taxon>Comamonadaceae</taxon>
        <taxon>Polaromonas</taxon>
    </lineage>
</organism>
<evidence type="ECO:0000255" key="1">
    <source>
        <dbReference type="HAMAP-Rule" id="MF_00518"/>
    </source>
</evidence>
<name>DTD_POLSJ</name>
<feature type="chain" id="PRO_0000259295" description="D-aminoacyl-tRNA deacylase">
    <location>
        <begin position="1"/>
        <end position="154"/>
    </location>
</feature>
<feature type="short sequence motif" description="Gly-cisPro motif, important for rejection of L-amino acids" evidence="1">
    <location>
        <begin position="142"/>
        <end position="143"/>
    </location>
</feature>
<proteinExistence type="inferred from homology"/>
<comment type="function">
    <text evidence="1">An aminoacyl-tRNA editing enzyme that deacylates mischarged D-aminoacyl-tRNAs. Also deacylates mischarged glycyl-tRNA(Ala), protecting cells against glycine mischarging by AlaRS. Acts via tRNA-based rather than protein-based catalysis; rejects L-amino acids rather than detecting D-amino acids in the active site. By recycling D-aminoacyl-tRNA to D-amino acids and free tRNA molecules, this enzyme counteracts the toxicity associated with the formation of D-aminoacyl-tRNA entities in vivo and helps enforce protein L-homochirality.</text>
</comment>
<comment type="catalytic activity">
    <reaction evidence="1">
        <text>glycyl-tRNA(Ala) + H2O = tRNA(Ala) + glycine + H(+)</text>
        <dbReference type="Rhea" id="RHEA:53744"/>
        <dbReference type="Rhea" id="RHEA-COMP:9657"/>
        <dbReference type="Rhea" id="RHEA-COMP:13640"/>
        <dbReference type="ChEBI" id="CHEBI:15377"/>
        <dbReference type="ChEBI" id="CHEBI:15378"/>
        <dbReference type="ChEBI" id="CHEBI:57305"/>
        <dbReference type="ChEBI" id="CHEBI:78442"/>
        <dbReference type="ChEBI" id="CHEBI:78522"/>
        <dbReference type="EC" id="3.1.1.96"/>
    </reaction>
</comment>
<comment type="catalytic activity">
    <reaction evidence="1">
        <text>a D-aminoacyl-tRNA + H2O = a tRNA + a D-alpha-amino acid + H(+)</text>
        <dbReference type="Rhea" id="RHEA:13953"/>
        <dbReference type="Rhea" id="RHEA-COMP:10123"/>
        <dbReference type="Rhea" id="RHEA-COMP:10124"/>
        <dbReference type="ChEBI" id="CHEBI:15377"/>
        <dbReference type="ChEBI" id="CHEBI:15378"/>
        <dbReference type="ChEBI" id="CHEBI:59871"/>
        <dbReference type="ChEBI" id="CHEBI:78442"/>
        <dbReference type="ChEBI" id="CHEBI:79333"/>
        <dbReference type="EC" id="3.1.1.96"/>
    </reaction>
</comment>
<comment type="subunit">
    <text evidence="1">Homodimer.</text>
</comment>
<comment type="subcellular location">
    <subcellularLocation>
        <location evidence="1">Cytoplasm</location>
    </subcellularLocation>
</comment>
<comment type="domain">
    <text evidence="1">A Gly-cisPro motif from one monomer fits into the active site of the other monomer to allow specific chiral rejection of L-amino acids.</text>
</comment>
<comment type="similarity">
    <text evidence="1">Belongs to the DTD family.</text>
</comment>
<gene>
    <name evidence="1" type="primary">dtd</name>
    <name type="ordered locus">Bpro_4098</name>
</gene>
<keyword id="KW-0963">Cytoplasm</keyword>
<keyword id="KW-0378">Hydrolase</keyword>
<keyword id="KW-1185">Reference proteome</keyword>
<keyword id="KW-0694">RNA-binding</keyword>
<keyword id="KW-0820">tRNA-binding</keyword>
<protein>
    <recommendedName>
        <fullName evidence="1">D-aminoacyl-tRNA deacylase</fullName>
        <shortName evidence="1">DTD</shortName>
        <ecNumber evidence="1">3.1.1.96</ecNumber>
    </recommendedName>
    <alternativeName>
        <fullName evidence="1">Gly-tRNA(Ala) deacylase</fullName>
    </alternativeName>
</protein>
<dbReference type="EC" id="3.1.1.96" evidence="1"/>
<dbReference type="EMBL" id="CP000316">
    <property type="protein sequence ID" value="ABE45991.1"/>
    <property type="molecule type" value="Genomic_DNA"/>
</dbReference>
<dbReference type="RefSeq" id="WP_011484981.1">
    <property type="nucleotide sequence ID" value="NC_007948.1"/>
</dbReference>
<dbReference type="SMR" id="Q124Q1"/>
<dbReference type="STRING" id="296591.Bpro_4098"/>
<dbReference type="KEGG" id="pol:Bpro_4098"/>
<dbReference type="eggNOG" id="COG1490">
    <property type="taxonomic scope" value="Bacteria"/>
</dbReference>
<dbReference type="HOGENOM" id="CLU_076901_1_1_4"/>
<dbReference type="OrthoDB" id="9801395at2"/>
<dbReference type="Proteomes" id="UP000001983">
    <property type="component" value="Chromosome"/>
</dbReference>
<dbReference type="GO" id="GO:0005737">
    <property type="term" value="C:cytoplasm"/>
    <property type="evidence" value="ECO:0007669"/>
    <property type="project" value="UniProtKB-SubCell"/>
</dbReference>
<dbReference type="GO" id="GO:0051500">
    <property type="term" value="F:D-tyrosyl-tRNA(Tyr) deacylase activity"/>
    <property type="evidence" value="ECO:0007669"/>
    <property type="project" value="TreeGrafter"/>
</dbReference>
<dbReference type="GO" id="GO:0106026">
    <property type="term" value="F:Gly-tRNA(Ala) deacylase activity"/>
    <property type="evidence" value="ECO:0007669"/>
    <property type="project" value="UniProtKB-UniRule"/>
</dbReference>
<dbReference type="GO" id="GO:0043908">
    <property type="term" value="F:Ser(Gly)-tRNA(Ala) hydrolase activity"/>
    <property type="evidence" value="ECO:0007669"/>
    <property type="project" value="UniProtKB-UniRule"/>
</dbReference>
<dbReference type="GO" id="GO:0000049">
    <property type="term" value="F:tRNA binding"/>
    <property type="evidence" value="ECO:0007669"/>
    <property type="project" value="UniProtKB-UniRule"/>
</dbReference>
<dbReference type="GO" id="GO:0019478">
    <property type="term" value="P:D-amino acid catabolic process"/>
    <property type="evidence" value="ECO:0007669"/>
    <property type="project" value="UniProtKB-UniRule"/>
</dbReference>
<dbReference type="FunFam" id="3.50.80.10:FF:000001">
    <property type="entry name" value="D-aminoacyl-tRNA deacylase"/>
    <property type="match status" value="1"/>
</dbReference>
<dbReference type="Gene3D" id="3.50.80.10">
    <property type="entry name" value="D-tyrosyl-tRNA(Tyr) deacylase"/>
    <property type="match status" value="1"/>
</dbReference>
<dbReference type="HAMAP" id="MF_00518">
    <property type="entry name" value="Deacylase_Dtd"/>
    <property type="match status" value="1"/>
</dbReference>
<dbReference type="InterPro" id="IPR003732">
    <property type="entry name" value="Daa-tRNA_deacyls_DTD"/>
</dbReference>
<dbReference type="InterPro" id="IPR023509">
    <property type="entry name" value="DTD-like_sf"/>
</dbReference>
<dbReference type="NCBIfam" id="TIGR00256">
    <property type="entry name" value="D-aminoacyl-tRNA deacylase"/>
    <property type="match status" value="1"/>
</dbReference>
<dbReference type="PANTHER" id="PTHR10472:SF5">
    <property type="entry name" value="D-AMINOACYL-TRNA DEACYLASE 1"/>
    <property type="match status" value="1"/>
</dbReference>
<dbReference type="PANTHER" id="PTHR10472">
    <property type="entry name" value="D-TYROSYL-TRNA TYR DEACYLASE"/>
    <property type="match status" value="1"/>
</dbReference>
<dbReference type="Pfam" id="PF02580">
    <property type="entry name" value="Tyr_Deacylase"/>
    <property type="match status" value="1"/>
</dbReference>
<dbReference type="SUPFAM" id="SSF69500">
    <property type="entry name" value="DTD-like"/>
    <property type="match status" value="1"/>
</dbReference>
<sequence length="154" mass="16235">MKAVLQRVAEARVVVAGETVGQIGQGLLVLVCAERGDAEGQADKLLAKILKLRIFSDEAGKMNRSVQDLDGAGKQGGLLIVSQFTLAADVSGGNRPSFTDAAAPDEGRRLYDYFVAQALALHPMVQTGQFAADMQVHLVNDGPVTIPLHIDPAA</sequence>
<accession>Q124Q1</accession>